<comment type="function">
    <text evidence="2 7 8">Acts both as a substrate recognition component of E3 ubiquitin-protein ligase complexes and as an atypical serine/threonine-protein kinase, playing key roles in various processes such as cell cycle, telomerase regulation and histone modification (By similarity). Probable substrate-specific adapter of a DCX (DDB1-CUL4-X-box) E3 ubiquitin-protein ligase complex, named CUL4A-RBX1-DDB1-DCAF1/VPRBP complex, which mediates ubiquitination and proteasome-dependent degradation of proteins such as NF2 (By similarity). Involved in the turnover of methylated proteins: recognizes and binds methylated proteins via its chromo domain, leading to ubiquitination of target proteins by the RBX1-DDB1-DCAF1/VPRBP complex (By similarity). The CUL4A-RBX1-DDB1-DCAF1/VPRBP complex is also involved in B-cell development: DCAF1 is recruited by RAG1 to ubiquitinate proteins, leading to limit error-prone repair during V(D)J recombination (PubMed:22157821). Also part of the EDVP complex, an E3 ligase complex that mediates ubiquitination of proteins such as TERT, leading to TERT degradation and telomerase inhibition (By similarity). The EDVP complex also mediates ubiquitination and degradation of CCP110 (By similarity). Also acts as an atypical serine/threonine-protein kinase that specifically mediates phosphorylation of 'Thr-120' of histone H2A (H2AT120ph) in a nucleosomal context, thereby repressing transcription (By similarity). H2AT120ph is present in the regulatory region of many tumor suppresor genes, down-regulates their transcription and is present at high level in a number of tumors (By similarity). Involved in JNK-mediated apoptosis during cell competition process via its interaction with LLGL1 and LLGL2 (By similarity). By acting on TET dioxygenses, essential for oocyte maintenance at the primordial follicle stage, hence essential for female fertility (PubMed:24357321).</text>
</comment>
<comment type="catalytic activity">
    <reaction>
        <text>L-seryl-[protein] + ATP = O-phospho-L-seryl-[protein] + ADP + H(+)</text>
        <dbReference type="Rhea" id="RHEA:17989"/>
        <dbReference type="Rhea" id="RHEA-COMP:9863"/>
        <dbReference type="Rhea" id="RHEA-COMP:11604"/>
        <dbReference type="ChEBI" id="CHEBI:15378"/>
        <dbReference type="ChEBI" id="CHEBI:29999"/>
        <dbReference type="ChEBI" id="CHEBI:30616"/>
        <dbReference type="ChEBI" id="CHEBI:83421"/>
        <dbReference type="ChEBI" id="CHEBI:456216"/>
        <dbReference type="EC" id="2.7.11.1"/>
    </reaction>
</comment>
<comment type="catalytic activity">
    <reaction>
        <text>L-threonyl-[protein] + ATP = O-phospho-L-threonyl-[protein] + ADP + H(+)</text>
        <dbReference type="Rhea" id="RHEA:46608"/>
        <dbReference type="Rhea" id="RHEA-COMP:11060"/>
        <dbReference type="Rhea" id="RHEA-COMP:11605"/>
        <dbReference type="ChEBI" id="CHEBI:15378"/>
        <dbReference type="ChEBI" id="CHEBI:30013"/>
        <dbReference type="ChEBI" id="CHEBI:30616"/>
        <dbReference type="ChEBI" id="CHEBI:61977"/>
        <dbReference type="ChEBI" id="CHEBI:456216"/>
        <dbReference type="EC" id="2.7.11.1"/>
    </reaction>
</comment>
<comment type="pathway">
    <text>Protein modification; protein ubiquitination.</text>
</comment>
<comment type="subunit">
    <text evidence="2">Component of the DCX (DDB1-CUL4-X-box) E3 ubiquitin-protein ligase complex, named CUL4A-RBX1-DDB1-DCAF1/VPRBP complex. Interacts with DDB1; the interaction is direct. Also forms a ternary complex with DDA1 and DDB1. Interacts with NF2 (via FERM domain). Component of the EDVP complex, a E3 ligase complex containing DYRK2, EDD/UBR5, DDB1 and DCAF1. Interacts with DYRK2; the interaction is direct. Interacts with RAG1; the interaction is direct. Interacts with LLGL1 and LLGL2. Interacts with histone H3. Interacts with ESR1 and LATS1; probably recruited by LATS1 to promote ESR1 ubiquitination and ubiquitin-mediated proteasomal degradation. Directly interacts with TET1, TET2 and TET3 (via C-terminus). Interacts with CEP78; promoting DCAF1 localization to centrosomes.</text>
</comment>
<comment type="subcellular location">
    <subcellularLocation>
        <location evidence="8">Cytoplasm</location>
    </subcellularLocation>
    <subcellularLocation>
        <location evidence="8 9 10">Nucleus</location>
    </subcellularLocation>
    <subcellularLocation>
        <location evidence="2">Cytoplasm</location>
        <location evidence="2">Cytoskeleton</location>
        <location evidence="2">Microtubule organizing center</location>
        <location evidence="2">Centrosome</location>
    </subcellularLocation>
    <text evidence="2 8 10">Associated with chromatin in a DDB1-independent and cell cycle-dependent manner: recruited to chromatin as DNA is being replicated and is released from chromatin before mitosis (PubMed:36056023). Homogenous pancellular distribution is observed outside S-phase and a slight cytoplasmic-to-nuclear translocation from early to late S-phase (PubMed:36056023). Colocalizes with TET1 and PCNA at replicating heterochromatin during late S phase (PubMed:36056023). More concentrated in nuclei than in cytoplasm in germinal vesicle (GV) stage oocytes, zygotes and the 2-cell stage, but distributed in the cytoplasm at the MII-stage oocytes (PubMed:24357321). Localizes to centrosomes following interaction with CEP78 (By similarity).</text>
</comment>
<comment type="alternative products">
    <event type="alternative splicing"/>
    <isoform>
        <id>Q80TR8-1</id>
        <name>1</name>
        <sequence type="displayed"/>
    </isoform>
    <isoform>
        <id>Q80TR8-2</id>
        <name>2</name>
        <sequence type="described" ref="VSP_025502"/>
    </isoform>
    <isoform>
        <id>Q80TR8-3</id>
        <name>3</name>
        <sequence type="described" ref="VSP_025500 VSP_025501"/>
    </isoform>
    <isoform>
        <id>Q80TR8-4</id>
        <name>4</name>
        <sequence type="described" ref="VSP_025503 VSP_025504"/>
    </isoform>
</comment>
<comment type="tissue specificity">
    <text evidence="5 8 9">Widely expressed (PubMed:11223251). Expressed in oocytes and zygotes (at protein level) (PubMed:24357321, PubMed:25557551).</text>
</comment>
<comment type="developmental stage">
    <text evidence="8">Expressed at high levels in germinal vesicle (GV) stage oocytes and at lower levels in MII-stage oocytes and zygotes (PubMed:24357321). Expression decreases from 4-cell stage to blastula (PubMed:24357321).</text>
</comment>
<comment type="domain">
    <text evidence="1">The protein kinase-like region mediates the threonine-protein kinase activity.</text>
</comment>
<comment type="domain">
    <text evidence="1">The DWD boxes are required for interaction with DDB1.</text>
</comment>
<comment type="domain">
    <text evidence="1">The chromo domain with a restricted pocket directly recognizes monomethylated substrates.</text>
</comment>
<comment type="disruption phenotype">
    <text evidence="6 7">Early embryonic lethality. Conditional knockout in mouse embryonic fibroblasts results in severely defective progression through S phase and subsequent apoptosis (PubMed:18606781). Conditional knockout in B lineage-specific cells arrests B-cell development at the pro-B-to-pre-B cell transition: mice display modest reduction of D-J(H) rearrangement, while V(H)-DJ(H) and V(kappa)-J(kappa) rearrangements are severely impaired. D-J(H) coding joints show longer junctional nucleotide insertions and a higher mutation frequency in D and J segments than normal (PubMed:22157821).</text>
</comment>
<comment type="similarity">
    <text evidence="13">Belongs to the VPRBP/DCAF1 family.</text>
</comment>
<comment type="sequence caution" evidence="13">
    <conflict type="erroneous initiation">
        <sequence resource="EMBL-CDS" id="BAC65654"/>
    </conflict>
    <text>Extended N-terminus.</text>
</comment>
<gene>
    <name evidence="2" type="primary">Dcaf1</name>
    <name type="synonym">Kiaa0800</name>
    <name type="synonym">Vprbp</name>
</gene>
<evidence type="ECO:0000250" key="1"/>
<evidence type="ECO:0000250" key="2">
    <source>
        <dbReference type="UniProtKB" id="Q9Y4B6"/>
    </source>
</evidence>
<evidence type="ECO:0000255" key="3">
    <source>
        <dbReference type="PROSITE-ProRule" id="PRU00126"/>
    </source>
</evidence>
<evidence type="ECO:0000256" key="4">
    <source>
        <dbReference type="SAM" id="MobiDB-lite"/>
    </source>
</evidence>
<evidence type="ECO:0000269" key="5">
    <source>
    </source>
</evidence>
<evidence type="ECO:0000269" key="6">
    <source>
    </source>
</evidence>
<evidence type="ECO:0000269" key="7">
    <source>
    </source>
</evidence>
<evidence type="ECO:0000269" key="8">
    <source>
    </source>
</evidence>
<evidence type="ECO:0000269" key="9">
    <source>
    </source>
</evidence>
<evidence type="ECO:0000269" key="10">
    <source>
    </source>
</evidence>
<evidence type="ECO:0000303" key="11">
    <source>
    </source>
</evidence>
<evidence type="ECO:0000303" key="12">
    <source>
    </source>
</evidence>
<evidence type="ECO:0000305" key="13"/>
<evidence type="ECO:0007744" key="14">
    <source>
    </source>
</evidence>
<reference key="1">
    <citation type="journal article" date="2004" name="Genome Res.">
        <title>The status, quality, and expansion of the NIH full-length cDNA project: the Mammalian Gene Collection (MGC).</title>
        <authorList>
            <consortium name="The MGC Project Team"/>
        </authorList>
    </citation>
    <scope>NUCLEOTIDE SEQUENCE [LARGE SCALE MRNA] (ISOFORM 4)</scope>
    <source>
        <strain>C57BL/6J</strain>
        <tissue>Brain</tissue>
    </source>
</reference>
<reference key="2">
    <citation type="journal article" date="2003" name="DNA Res.">
        <title>Prediction of the coding sequences of mouse homologues of KIAA gene: II. The complete nucleotide sequences of 400 mouse KIAA-homologous cDNAs identified by screening of terminal sequences of cDNA clones randomly sampled from size-fractionated libraries.</title>
        <authorList>
            <person name="Okazaki N."/>
            <person name="Kikuno R."/>
            <person name="Ohara R."/>
            <person name="Inamoto S."/>
            <person name="Aizawa H."/>
            <person name="Yuasa S."/>
            <person name="Nakajima D."/>
            <person name="Nagase T."/>
            <person name="Ohara O."/>
            <person name="Koga H."/>
        </authorList>
    </citation>
    <scope>NUCLEOTIDE SEQUENCE [LARGE SCALE MRNA] OF 1-1488 (ISOFORM 1)</scope>
</reference>
<reference key="3">
    <citation type="journal article" date="2005" name="Science">
        <title>The transcriptional landscape of the mammalian genome.</title>
        <authorList>
            <person name="Carninci P."/>
            <person name="Kasukawa T."/>
            <person name="Katayama S."/>
            <person name="Gough J."/>
            <person name="Frith M.C."/>
            <person name="Maeda N."/>
            <person name="Oyama R."/>
            <person name="Ravasi T."/>
            <person name="Lenhard B."/>
            <person name="Wells C."/>
            <person name="Kodzius R."/>
            <person name="Shimokawa K."/>
            <person name="Bajic V.B."/>
            <person name="Brenner S.E."/>
            <person name="Batalov S."/>
            <person name="Forrest A.R."/>
            <person name="Zavolan M."/>
            <person name="Davis M.J."/>
            <person name="Wilming L.G."/>
            <person name="Aidinis V."/>
            <person name="Allen J.E."/>
            <person name="Ambesi-Impiombato A."/>
            <person name="Apweiler R."/>
            <person name="Aturaliya R.N."/>
            <person name="Bailey T.L."/>
            <person name="Bansal M."/>
            <person name="Baxter L."/>
            <person name="Beisel K.W."/>
            <person name="Bersano T."/>
            <person name="Bono H."/>
            <person name="Chalk A.M."/>
            <person name="Chiu K.P."/>
            <person name="Choudhary V."/>
            <person name="Christoffels A."/>
            <person name="Clutterbuck D.R."/>
            <person name="Crowe M.L."/>
            <person name="Dalla E."/>
            <person name="Dalrymple B.P."/>
            <person name="de Bono B."/>
            <person name="Della Gatta G."/>
            <person name="di Bernardo D."/>
            <person name="Down T."/>
            <person name="Engstrom P."/>
            <person name="Fagiolini M."/>
            <person name="Faulkner G."/>
            <person name="Fletcher C.F."/>
            <person name="Fukushima T."/>
            <person name="Furuno M."/>
            <person name="Futaki S."/>
            <person name="Gariboldi M."/>
            <person name="Georgii-Hemming P."/>
            <person name="Gingeras T.R."/>
            <person name="Gojobori T."/>
            <person name="Green R.E."/>
            <person name="Gustincich S."/>
            <person name="Harbers M."/>
            <person name="Hayashi Y."/>
            <person name="Hensch T.K."/>
            <person name="Hirokawa N."/>
            <person name="Hill D."/>
            <person name="Huminiecki L."/>
            <person name="Iacono M."/>
            <person name="Ikeo K."/>
            <person name="Iwama A."/>
            <person name="Ishikawa T."/>
            <person name="Jakt M."/>
            <person name="Kanapin A."/>
            <person name="Katoh M."/>
            <person name="Kawasawa Y."/>
            <person name="Kelso J."/>
            <person name="Kitamura H."/>
            <person name="Kitano H."/>
            <person name="Kollias G."/>
            <person name="Krishnan S.P."/>
            <person name="Kruger A."/>
            <person name="Kummerfeld S.K."/>
            <person name="Kurochkin I.V."/>
            <person name="Lareau L.F."/>
            <person name="Lazarevic D."/>
            <person name="Lipovich L."/>
            <person name="Liu J."/>
            <person name="Liuni S."/>
            <person name="McWilliam S."/>
            <person name="Madan Babu M."/>
            <person name="Madera M."/>
            <person name="Marchionni L."/>
            <person name="Matsuda H."/>
            <person name="Matsuzawa S."/>
            <person name="Miki H."/>
            <person name="Mignone F."/>
            <person name="Miyake S."/>
            <person name="Morris K."/>
            <person name="Mottagui-Tabar S."/>
            <person name="Mulder N."/>
            <person name="Nakano N."/>
            <person name="Nakauchi H."/>
            <person name="Ng P."/>
            <person name="Nilsson R."/>
            <person name="Nishiguchi S."/>
            <person name="Nishikawa S."/>
            <person name="Nori F."/>
            <person name="Ohara O."/>
            <person name="Okazaki Y."/>
            <person name="Orlando V."/>
            <person name="Pang K.C."/>
            <person name="Pavan W.J."/>
            <person name="Pavesi G."/>
            <person name="Pesole G."/>
            <person name="Petrovsky N."/>
            <person name="Piazza S."/>
            <person name="Reed J."/>
            <person name="Reid J.F."/>
            <person name="Ring B.Z."/>
            <person name="Ringwald M."/>
            <person name="Rost B."/>
            <person name="Ruan Y."/>
            <person name="Salzberg S.L."/>
            <person name="Sandelin A."/>
            <person name="Schneider C."/>
            <person name="Schoenbach C."/>
            <person name="Sekiguchi K."/>
            <person name="Semple C.A."/>
            <person name="Seno S."/>
            <person name="Sessa L."/>
            <person name="Sheng Y."/>
            <person name="Shibata Y."/>
            <person name="Shimada H."/>
            <person name="Shimada K."/>
            <person name="Silva D."/>
            <person name="Sinclair B."/>
            <person name="Sperling S."/>
            <person name="Stupka E."/>
            <person name="Sugiura K."/>
            <person name="Sultana R."/>
            <person name="Takenaka Y."/>
            <person name="Taki K."/>
            <person name="Tammoja K."/>
            <person name="Tan S.L."/>
            <person name="Tang S."/>
            <person name="Taylor M.S."/>
            <person name="Tegner J."/>
            <person name="Teichmann S.A."/>
            <person name="Ueda H.R."/>
            <person name="van Nimwegen E."/>
            <person name="Verardo R."/>
            <person name="Wei C.L."/>
            <person name="Yagi K."/>
            <person name="Yamanishi H."/>
            <person name="Zabarovsky E."/>
            <person name="Zhu S."/>
            <person name="Zimmer A."/>
            <person name="Hide W."/>
            <person name="Bult C."/>
            <person name="Grimmond S.M."/>
            <person name="Teasdale R.D."/>
            <person name="Liu E.T."/>
            <person name="Brusic V."/>
            <person name="Quackenbush J."/>
            <person name="Wahlestedt C."/>
            <person name="Mattick J.S."/>
            <person name="Hume D.A."/>
            <person name="Kai C."/>
            <person name="Sasaki D."/>
            <person name="Tomaru Y."/>
            <person name="Fukuda S."/>
            <person name="Kanamori-Katayama M."/>
            <person name="Suzuki M."/>
            <person name="Aoki J."/>
            <person name="Arakawa T."/>
            <person name="Iida J."/>
            <person name="Imamura K."/>
            <person name="Itoh M."/>
            <person name="Kato T."/>
            <person name="Kawaji H."/>
            <person name="Kawagashira N."/>
            <person name="Kawashima T."/>
            <person name="Kojima M."/>
            <person name="Kondo S."/>
            <person name="Konno H."/>
            <person name="Nakano K."/>
            <person name="Ninomiya N."/>
            <person name="Nishio T."/>
            <person name="Okada M."/>
            <person name="Plessy C."/>
            <person name="Shibata K."/>
            <person name="Shiraki T."/>
            <person name="Suzuki S."/>
            <person name="Tagami M."/>
            <person name="Waki K."/>
            <person name="Watahiki A."/>
            <person name="Okamura-Oho Y."/>
            <person name="Suzuki H."/>
            <person name="Kawai J."/>
            <person name="Hayashizaki Y."/>
        </authorList>
    </citation>
    <scope>NUCLEOTIDE SEQUENCE [LARGE SCALE MRNA] OF 613-1506 (ISOFORM 3)</scope>
    <scope>NUCLEOTIDE SEQUENCE [LARGE SCALE MRNA] OF 1269-1506 (ISOFORM 2)</scope>
    <source>
        <strain>C57BL/6J</strain>
        <tissue>Egg</tissue>
        <tissue>Head</tissue>
    </source>
</reference>
<reference key="4">
    <citation type="journal article" date="2001" name="Gene">
        <title>Cytoplasmic retention of HIV-1 regulatory protein Vpr by protein-protein interaction with a novel human cytoplasmic protein VprBP.</title>
        <authorList>
            <person name="Zhang S."/>
            <person name="Feng Y."/>
            <person name="Narayan O."/>
            <person name="Zhao L.-J."/>
        </authorList>
    </citation>
    <scope>TISSUE SPECIFICITY</scope>
</reference>
<reference key="5">
    <citation type="journal article" date="2008" name="Mol. Cell. Biol.">
        <title>Human immunodeficiency virus type 1 Vpr-binding protein VprBP, a WD40 protein associated with the DDB1-CUL4 E3 ubiquitin ligase, is essential for DNA replication and embryonic development.</title>
        <authorList>
            <person name="McCall C.M."/>
            <person name="Miliani de Marval P.L."/>
            <person name="Chastain P.D. II"/>
            <person name="Jackson S.C."/>
            <person name="He Y.J."/>
            <person name="Kotake Y."/>
            <person name="Cook J.G."/>
            <person name="Xiong Y."/>
        </authorList>
    </citation>
    <scope>DISRUPTION PHENOTYPE</scope>
    <scope>CONDITIONAL KNOCKOUT</scope>
</reference>
<reference key="6">
    <citation type="journal article" date="2009" name="Mol. Cell. Proteomics">
        <title>Large scale localization of protein phosphorylation by use of electron capture dissociation mass spectrometry.</title>
        <authorList>
            <person name="Sweet S.M."/>
            <person name="Bailey C.M."/>
            <person name="Cunningham D.L."/>
            <person name="Heath J.K."/>
            <person name="Cooper H.J."/>
        </authorList>
    </citation>
    <scope>IDENTIFICATION BY MASS SPECTROMETRY [LARGE SCALE ANALYSIS]</scope>
    <source>
        <tissue>Embryonic fibroblast</tissue>
    </source>
</reference>
<reference key="7">
    <citation type="journal article" date="2010" name="Cell">
        <title>A tissue-specific atlas of mouse protein phosphorylation and expression.</title>
        <authorList>
            <person name="Huttlin E.L."/>
            <person name="Jedrychowski M.P."/>
            <person name="Elias J.E."/>
            <person name="Goswami T."/>
            <person name="Rad R."/>
            <person name="Beausoleil S.A."/>
            <person name="Villen J."/>
            <person name="Haas W."/>
            <person name="Sowa M.E."/>
            <person name="Gygi S.P."/>
        </authorList>
    </citation>
    <scope>IDENTIFICATION BY MASS SPECTROMETRY [LARGE SCALE ANALYSIS]</scope>
    <source>
        <tissue>Lung</tissue>
        <tissue>Pancreas</tissue>
        <tissue>Testis</tissue>
    </source>
</reference>
<reference key="8">
    <citation type="journal article" date="2012" name="EMBO J.">
        <title>VprBP binds full-length RAG1 and is required for B-cell development and V(D)J recombination fidelity.</title>
        <authorList>
            <person name="Kassmeier M.D."/>
            <person name="Mondal K."/>
            <person name="Palmer V.L."/>
            <person name="Raval P."/>
            <person name="Kumar S."/>
            <person name="Perry G.A."/>
            <person name="Anderson D.K."/>
            <person name="Ciborowski P."/>
            <person name="Jackson S."/>
            <person name="Xiong Y."/>
            <person name="Swanson P.C."/>
        </authorList>
    </citation>
    <scope>FUNCTION</scope>
    <scope>DISRUPTION PHENOTYPE</scope>
    <scope>CONDITIONAL KNOCKOUT</scope>
</reference>
<reference key="9">
    <citation type="journal article" date="2013" name="Mol. Cell">
        <title>SIRT5-mediated lysine desuccinylation impacts diverse metabolic pathways.</title>
        <authorList>
            <person name="Park J."/>
            <person name="Chen Y."/>
            <person name="Tishkoff D.X."/>
            <person name="Peng C."/>
            <person name="Tan M."/>
            <person name="Dai L."/>
            <person name="Xie Z."/>
            <person name="Zhang Y."/>
            <person name="Zwaans B.M."/>
            <person name="Skinner M.E."/>
            <person name="Lombard D.B."/>
            <person name="Zhao Y."/>
        </authorList>
    </citation>
    <scope>ACETYLATION [LARGE SCALE ANALYSIS] AT LYS-700</scope>
    <scope>IDENTIFICATION BY MASS SPECTROMETRY [LARGE SCALE ANALYSIS]</scope>
    <source>
        <tissue>Embryonic fibroblast</tissue>
    </source>
</reference>
<reference key="10">
    <citation type="journal article" date="2013" name="Science">
        <title>CRL4 complex regulates mammalian oocyte survival and reprogramming by activation of TET proteins.</title>
        <authorList>
            <person name="Yu C."/>
            <person name="Zhang Y.L."/>
            <person name="Pan W.W."/>
            <person name="Li X.M."/>
            <person name="Wang Z.W."/>
            <person name="Ge Z.J."/>
            <person name="Zhou J.J."/>
            <person name="Cang Y."/>
            <person name="Tong C."/>
            <person name="Sun Q.Y."/>
            <person name="Fan H.Y."/>
        </authorList>
    </citation>
    <scope>FUNCTION</scope>
    <scope>SUBCELLULAR LOCATION</scope>
    <scope>TISSUE SPECIFICITY</scope>
    <scope>DEVELOPMENTAL STAGE</scope>
    <scope>MUTAGENESIS OF ARG-1246 AND ARG-1282</scope>
</reference>
<reference key="11">
    <citation type="journal article" date="2015" name="Mol. Cell">
        <title>CRL4(VprBP) E3 ligase promotes monoubiquitylation and chromatin binding of TET dioxygenases.</title>
        <authorList>
            <person name="Nakagawa T."/>
            <person name="Lv L."/>
            <person name="Nakagawa M."/>
            <person name="Yu Y."/>
            <person name="Yu C."/>
            <person name="D'Alessio A.C."/>
            <person name="Nakayama K."/>
            <person name="Fan H.Y."/>
            <person name="Chen X."/>
            <person name="Xiong Y."/>
        </authorList>
    </citation>
    <scope>FUNCTION</scope>
    <scope>SUBCELLULAR LOCATION</scope>
    <scope>TISSUE SPECIFICITY</scope>
    <scope>INTERACTION WITH TET1; TET2 AND TET3</scope>
</reference>
<reference key="12">
    <citation type="journal article" date="2022" name="Nat. Commun.">
        <title>Isoform-specific and ubiquitination dependent recruitment of Tet1 to replicating heterochromatin modulates methylcytosine oxidation.</title>
        <authorList>
            <person name="Arroyo M."/>
            <person name="Hastert F.D."/>
            <person name="Zhadan A."/>
            <person name="Schelter F."/>
            <person name="Zimbelmann S."/>
            <person name="Rausch C."/>
            <person name="Ludwig A.K."/>
            <person name="Carell T."/>
            <person name="Cardoso M.C."/>
        </authorList>
    </citation>
    <scope>SUBCELLULAR LOCATION</scope>
</reference>
<name>DCAF1_MOUSE</name>
<protein>
    <recommendedName>
        <fullName evidence="2">DDB1- and CUL4-associated factor 1</fullName>
    </recommendedName>
    <alternativeName>
        <fullName>Serine/threonine-protein kinase VPRBP</fullName>
        <ecNumber>2.7.11.1</ecNumber>
    </alternativeName>
</protein>
<keyword id="KW-0007">Acetylation</keyword>
<keyword id="KW-0025">Alternative splicing</keyword>
<keyword id="KW-0067">ATP-binding</keyword>
<keyword id="KW-0156">Chromatin regulator</keyword>
<keyword id="KW-0963">Cytoplasm</keyword>
<keyword id="KW-0206">Cytoskeleton</keyword>
<keyword id="KW-0945">Host-virus interaction</keyword>
<keyword id="KW-0418">Kinase</keyword>
<keyword id="KW-0547">Nucleotide-binding</keyword>
<keyword id="KW-0539">Nucleus</keyword>
<keyword id="KW-0597">Phosphoprotein</keyword>
<keyword id="KW-1185">Reference proteome</keyword>
<keyword id="KW-0677">Repeat</keyword>
<keyword id="KW-0723">Serine/threonine-protein kinase</keyword>
<keyword id="KW-0804">Transcription</keyword>
<keyword id="KW-0805">Transcription regulation</keyword>
<keyword id="KW-0808">Transferase</keyword>
<keyword id="KW-0833">Ubl conjugation pathway</keyword>
<keyword id="KW-0853">WD repeat</keyword>
<accession>Q80TR8</accession>
<accession>Q3UXD5</accession>
<accession>Q6P1E2</accession>
<accession>Q8CDY3</accession>
<proteinExistence type="evidence at protein level"/>
<feature type="chain" id="PRO_0000287474" description="DDB1- and CUL4-associated factor 1">
    <location>
        <begin position="1"/>
        <end position="1506"/>
    </location>
</feature>
<feature type="domain" description="Chromo">
    <location>
        <begin position="561"/>
        <end position="592"/>
    </location>
</feature>
<feature type="domain" description="LisH" evidence="3">
    <location>
        <begin position="845"/>
        <end position="877"/>
    </location>
</feature>
<feature type="repeat" description="WD 1">
    <location>
        <begin position="1090"/>
        <end position="1129"/>
    </location>
</feature>
<feature type="repeat" description="WD 2">
    <location>
        <begin position="1132"/>
        <end position="1173"/>
    </location>
</feature>
<feature type="repeat" description="WD 3">
    <location>
        <begin position="1175"/>
        <end position="1212"/>
    </location>
</feature>
<feature type="repeat" description="WD 4">
    <location>
        <begin position="1214"/>
        <end position="1246"/>
    </location>
</feature>
<feature type="repeat" description="WD 5">
    <location>
        <begin position="1247"/>
        <end position="1289"/>
    </location>
</feature>
<feature type="region of interest" description="Protein kinase-like" evidence="1">
    <location>
        <begin position="141"/>
        <end position="499"/>
    </location>
</feature>
<feature type="region of interest" description="Disordered" evidence="4">
    <location>
        <begin position="241"/>
        <end position="275"/>
    </location>
</feature>
<feature type="region of interest" description="Disordered" evidence="4">
    <location>
        <begin position="916"/>
        <end position="946"/>
    </location>
</feature>
<feature type="region of interest" description="Disordered" evidence="4">
    <location>
        <begin position="977"/>
        <end position="999"/>
    </location>
</feature>
<feature type="region of interest" description="WD repeat-like region">
    <location>
        <begin position="1090"/>
        <end position="1289"/>
    </location>
</feature>
<feature type="region of interest" description="Disordered" evidence="4">
    <location>
        <begin position="1392"/>
        <end position="1506"/>
    </location>
</feature>
<feature type="region of interest" description="Interaction with NF2" evidence="1">
    <location>
        <begin position="1417"/>
        <end position="1506"/>
    </location>
</feature>
<feature type="short sequence motif" description="DWD box 1">
    <location>
        <begin position="1241"/>
        <end position="1248"/>
    </location>
</feature>
<feature type="short sequence motif" description="DWD box 2">
    <location>
        <begin position="1277"/>
        <end position="1284"/>
    </location>
</feature>
<feature type="compositionally biased region" description="Pro residues" evidence="4">
    <location>
        <begin position="924"/>
        <end position="943"/>
    </location>
</feature>
<feature type="compositionally biased region" description="Acidic residues" evidence="4">
    <location>
        <begin position="1395"/>
        <end position="1482"/>
    </location>
</feature>
<feature type="compositionally biased region" description="Acidic residues" evidence="4">
    <location>
        <begin position="1489"/>
        <end position="1500"/>
    </location>
</feature>
<feature type="modified residue" description="Phosphoserine" evidence="2">
    <location>
        <position position="202"/>
    </location>
</feature>
<feature type="modified residue" description="Phosphoserine" evidence="2">
    <location>
        <position position="254"/>
    </location>
</feature>
<feature type="modified residue" description="N6-acetyllysine" evidence="14">
    <location>
        <position position="700"/>
    </location>
</feature>
<feature type="modified residue" description="Phosphoserine" evidence="2">
    <location>
        <position position="827"/>
    </location>
</feature>
<feature type="modified residue" description="Phosphothreonine" evidence="2">
    <location>
        <position position="887"/>
    </location>
</feature>
<feature type="modified residue" description="Phosphoserine" evidence="2">
    <location>
        <position position="894"/>
    </location>
</feature>
<feature type="modified residue" description="Phosphoserine" evidence="2">
    <location>
        <position position="897"/>
    </location>
</feature>
<feature type="modified residue" description="Phosphoserine" evidence="2">
    <location>
        <position position="978"/>
    </location>
</feature>
<feature type="modified residue" description="Phosphoserine" evidence="2">
    <location>
        <position position="999"/>
    </location>
</feature>
<feature type="modified residue" description="Phosphoserine" evidence="2">
    <location>
        <position position="1327"/>
    </location>
</feature>
<feature type="splice variant" id="VSP_025500" description="In isoform 3." evidence="12">
    <original>LIGRISFIRERPSPCNGRKIRVLRQK</original>
    <variation>PPRKGIAFLKGKTNMSLGISQYIFFV</variation>
    <location>
        <begin position="952"/>
        <end position="977"/>
    </location>
</feature>
<feature type="splice variant" id="VSP_025501" description="In isoform 3." evidence="12">
    <location>
        <begin position="978"/>
        <end position="1506"/>
    </location>
</feature>
<feature type="splice variant" id="VSP_025502" description="In isoform 2." evidence="12">
    <original>I</original>
    <variation>IVMFYFS</variation>
    <location>
        <position position="1344"/>
    </location>
</feature>
<feature type="splice variant" id="VSP_025503" description="In isoform 4." evidence="11">
    <original>EEEEQEEEDDDEDDDD</original>
    <variation>QTARTTLIWKMTSSYL</variation>
    <location>
        <begin position="1404"/>
        <end position="1419"/>
    </location>
</feature>
<feature type="splice variant" id="VSP_025504" description="In isoform 4." evidence="11">
    <location>
        <begin position="1420"/>
        <end position="1506"/>
    </location>
</feature>
<feature type="mutagenesis site" description="Loss of interaction with DDB1 and strong decrease in TET2 monoubiquitination; when associated with A-1282." evidence="8">
    <original>R</original>
    <variation>A</variation>
    <location>
        <position position="1246"/>
    </location>
</feature>
<feature type="mutagenesis site" description="Loss of interaction with DDB1 and strong decrease in TET2 monoubiquitination; when associated with A-1246." evidence="8">
    <original>R</original>
    <variation>A</variation>
    <location>
        <position position="1282"/>
    </location>
</feature>
<feature type="sequence conflict" description="In Ref. 1; BAC65654." evidence="13" ref="1">
    <original>T</original>
    <variation>S</variation>
    <location>
        <position position="1488"/>
    </location>
</feature>
<dbReference type="EC" id="2.7.11.1"/>
<dbReference type="EMBL" id="BC065119">
    <property type="protein sequence ID" value="AAH65119.1"/>
    <property type="molecule type" value="mRNA"/>
</dbReference>
<dbReference type="EMBL" id="AK122372">
    <property type="protein sequence ID" value="BAC65654.3"/>
    <property type="status" value="ALT_INIT"/>
    <property type="molecule type" value="Transcribed_RNA"/>
</dbReference>
<dbReference type="EMBL" id="AK029372">
    <property type="protein sequence ID" value="BAC26425.1"/>
    <property type="molecule type" value="mRNA"/>
</dbReference>
<dbReference type="EMBL" id="AK135721">
    <property type="protein sequence ID" value="BAE22628.1"/>
    <property type="molecule type" value="mRNA"/>
</dbReference>
<dbReference type="CCDS" id="CCDS23485.1">
    <molecule id="Q80TR8-4"/>
</dbReference>
<dbReference type="CCDS" id="CCDS90657.1">
    <molecule id="Q80TR8-1"/>
</dbReference>
<dbReference type="RefSeq" id="NP_001015507.1">
    <molecule id="Q80TR8-4"/>
    <property type="nucleotide sequence ID" value="NM_001015507.3"/>
</dbReference>
<dbReference type="RefSeq" id="NP_001360859.1">
    <molecule id="Q80TR8-1"/>
    <property type="nucleotide sequence ID" value="NM_001373930.1"/>
</dbReference>
<dbReference type="RefSeq" id="XP_006511818.1">
    <property type="nucleotide sequence ID" value="XM_006511755.3"/>
</dbReference>
<dbReference type="SMR" id="Q80TR8"/>
<dbReference type="BioGRID" id="236458">
    <property type="interactions" value="15"/>
</dbReference>
<dbReference type="FunCoup" id="Q80TR8">
    <property type="interactions" value="4188"/>
</dbReference>
<dbReference type="IntAct" id="Q80TR8">
    <property type="interactions" value="2"/>
</dbReference>
<dbReference type="STRING" id="10090.ENSMUSP00000123865"/>
<dbReference type="GlyGen" id="Q80TR8">
    <property type="glycosylation" value="5 sites, 3 N-linked glycans (3 sites), 1 O-linked glycan (1 site)"/>
</dbReference>
<dbReference type="iPTMnet" id="Q80TR8"/>
<dbReference type="PhosphoSitePlus" id="Q80TR8"/>
<dbReference type="jPOST" id="Q80TR8"/>
<dbReference type="PaxDb" id="10090-ENSMUSP00000123865"/>
<dbReference type="PeptideAtlas" id="Q80TR8"/>
<dbReference type="ProteomicsDB" id="279282">
    <molecule id="Q80TR8-1"/>
</dbReference>
<dbReference type="ProteomicsDB" id="279283">
    <molecule id="Q80TR8-2"/>
</dbReference>
<dbReference type="ProteomicsDB" id="279284">
    <molecule id="Q80TR8-3"/>
</dbReference>
<dbReference type="ProteomicsDB" id="279285">
    <molecule id="Q80TR8-4"/>
</dbReference>
<dbReference type="Pumba" id="Q80TR8"/>
<dbReference type="Antibodypedia" id="31017">
    <property type="antibodies" value="136 antibodies from 23 providers"/>
</dbReference>
<dbReference type="Ensembl" id="ENSMUST00000055009.15">
    <molecule id="Q80TR8-1"/>
    <property type="protein sequence ID" value="ENSMUSP00000060025.9"/>
    <property type="gene ID" value="ENSMUSG00000040325.17"/>
</dbReference>
<dbReference type="Ensembl" id="ENSMUST00000159645.8">
    <molecule id="Q80TR8-4"/>
    <property type="protein sequence ID" value="ENSMUSP00000123865.2"/>
    <property type="gene ID" value="ENSMUSG00000040325.17"/>
</dbReference>
<dbReference type="Ensembl" id="ENSMUST00000161758.3">
    <molecule id="Q80TR8-2"/>
    <property type="protein sequence ID" value="ENSMUSP00000125730.2"/>
    <property type="gene ID" value="ENSMUSG00000040325.17"/>
</dbReference>
<dbReference type="GeneID" id="321006"/>
<dbReference type="KEGG" id="mmu:321006"/>
<dbReference type="UCSC" id="uc009rkp.2">
    <molecule id="Q80TR8-4"/>
    <property type="organism name" value="mouse"/>
</dbReference>
<dbReference type="AGR" id="MGI:2445220"/>
<dbReference type="CTD" id="9730"/>
<dbReference type="MGI" id="MGI:2445220">
    <property type="gene designation" value="Dcaf1"/>
</dbReference>
<dbReference type="VEuPathDB" id="HostDB:ENSMUSG00000040325"/>
<dbReference type="eggNOG" id="KOG1832">
    <property type="taxonomic scope" value="Eukaryota"/>
</dbReference>
<dbReference type="GeneTree" id="ENSGT00390000005874"/>
<dbReference type="HOGENOM" id="CLU_001785_1_0_1"/>
<dbReference type="InParanoid" id="Q80TR8"/>
<dbReference type="OMA" id="ECSQDQA"/>
<dbReference type="PhylomeDB" id="Q80TR8"/>
<dbReference type="TreeFam" id="TF314434"/>
<dbReference type="Reactome" id="R-MMU-983168">
    <property type="pathway name" value="Antigen processing: Ubiquitination &amp; Proteasome degradation"/>
</dbReference>
<dbReference type="UniPathway" id="UPA00143"/>
<dbReference type="BioGRID-ORCS" id="321006">
    <property type="hits" value="26 hits in 80 CRISPR screens"/>
</dbReference>
<dbReference type="ChiTaRS" id="Vprbp">
    <property type="organism name" value="mouse"/>
</dbReference>
<dbReference type="PRO" id="PR:Q80TR8"/>
<dbReference type="Proteomes" id="UP000000589">
    <property type="component" value="Chromosome 9"/>
</dbReference>
<dbReference type="RNAct" id="Q80TR8">
    <property type="molecule type" value="protein"/>
</dbReference>
<dbReference type="Bgee" id="ENSMUSG00000040325">
    <property type="expression patterns" value="Expressed in undifferentiated genital tubercle and 270 other cell types or tissues"/>
</dbReference>
<dbReference type="ExpressionAtlas" id="Q80TR8">
    <property type="expression patterns" value="baseline and differential"/>
</dbReference>
<dbReference type="GO" id="GO:0005813">
    <property type="term" value="C:centrosome"/>
    <property type="evidence" value="ECO:0000250"/>
    <property type="project" value="UniProtKB"/>
</dbReference>
<dbReference type="GO" id="GO:0008180">
    <property type="term" value="C:COP9 signalosome"/>
    <property type="evidence" value="ECO:0007669"/>
    <property type="project" value="Ensembl"/>
</dbReference>
<dbReference type="GO" id="GO:0080008">
    <property type="term" value="C:Cul4-RING E3 ubiquitin ligase complex"/>
    <property type="evidence" value="ECO:0000250"/>
    <property type="project" value="UniProtKB"/>
</dbReference>
<dbReference type="GO" id="GO:0005737">
    <property type="term" value="C:cytoplasm"/>
    <property type="evidence" value="ECO:0007669"/>
    <property type="project" value="UniProtKB-SubCell"/>
</dbReference>
<dbReference type="GO" id="GO:0001650">
    <property type="term" value="C:fibrillar center"/>
    <property type="evidence" value="ECO:0007669"/>
    <property type="project" value="Ensembl"/>
</dbReference>
<dbReference type="GO" id="GO:0005654">
    <property type="term" value="C:nucleoplasm"/>
    <property type="evidence" value="ECO:0007669"/>
    <property type="project" value="Ensembl"/>
</dbReference>
<dbReference type="GO" id="GO:0005524">
    <property type="term" value="F:ATP binding"/>
    <property type="evidence" value="ECO:0007669"/>
    <property type="project" value="UniProtKB-KW"/>
</dbReference>
<dbReference type="GO" id="GO:1990244">
    <property type="term" value="F:histone H2AT120 kinase activity"/>
    <property type="evidence" value="ECO:0000250"/>
    <property type="project" value="UniProtKB"/>
</dbReference>
<dbReference type="GO" id="GO:0030331">
    <property type="term" value="F:nuclear estrogen receptor binding"/>
    <property type="evidence" value="ECO:0007669"/>
    <property type="project" value="Ensembl"/>
</dbReference>
<dbReference type="GO" id="GO:0106310">
    <property type="term" value="F:protein serine kinase activity"/>
    <property type="evidence" value="ECO:0007669"/>
    <property type="project" value="RHEA"/>
</dbReference>
<dbReference type="GO" id="GO:1990756">
    <property type="term" value="F:ubiquitin-like ligase-substrate adaptor activity"/>
    <property type="evidence" value="ECO:0000250"/>
    <property type="project" value="UniProtKB"/>
</dbReference>
<dbReference type="GO" id="GO:0030183">
    <property type="term" value="P:B cell differentiation"/>
    <property type="evidence" value="ECO:0000315"/>
    <property type="project" value="UniProtKB"/>
</dbReference>
<dbReference type="GO" id="GO:0035212">
    <property type="term" value="P:cell competition in a multicellular organism"/>
    <property type="evidence" value="ECO:0000250"/>
    <property type="project" value="UniProtKB"/>
</dbReference>
<dbReference type="GO" id="GO:0000122">
    <property type="term" value="P:negative regulation of transcription by RNA polymerase II"/>
    <property type="evidence" value="ECO:0000250"/>
    <property type="project" value="UniProtKB"/>
</dbReference>
<dbReference type="GO" id="GO:0045732">
    <property type="term" value="P:positive regulation of protein catabolic process"/>
    <property type="evidence" value="ECO:0007669"/>
    <property type="project" value="Ensembl"/>
</dbReference>
<dbReference type="GO" id="GO:0043687">
    <property type="term" value="P:post-translational protein modification"/>
    <property type="evidence" value="ECO:0000250"/>
    <property type="project" value="UniProtKB"/>
</dbReference>
<dbReference type="GO" id="GO:0043161">
    <property type="term" value="P:proteasome-mediated ubiquitin-dependent protein catabolic process"/>
    <property type="evidence" value="ECO:0000250"/>
    <property type="project" value="UniProtKB"/>
</dbReference>
<dbReference type="GO" id="GO:0016567">
    <property type="term" value="P:protein ubiquitination"/>
    <property type="evidence" value="ECO:0007669"/>
    <property type="project" value="UniProtKB-UniPathway"/>
</dbReference>
<dbReference type="GO" id="GO:0033151">
    <property type="term" value="P:V(D)J recombination"/>
    <property type="evidence" value="ECO:0000315"/>
    <property type="project" value="UniProtKB"/>
</dbReference>
<dbReference type="FunFam" id="2.130.10.10:FF:000055">
    <property type="entry name" value="DDB1 and CUL4-associated factor 1"/>
    <property type="match status" value="1"/>
</dbReference>
<dbReference type="Gene3D" id="1.25.10.10">
    <property type="entry name" value="Leucine-rich Repeat Variant"/>
    <property type="match status" value="1"/>
</dbReference>
<dbReference type="Gene3D" id="2.130.10.10">
    <property type="entry name" value="YVTN repeat-like/Quinoprotein amine dehydrogenase"/>
    <property type="match status" value="1"/>
</dbReference>
<dbReference type="InterPro" id="IPR011989">
    <property type="entry name" value="ARM-like"/>
</dbReference>
<dbReference type="InterPro" id="IPR016024">
    <property type="entry name" value="ARM-type_fold"/>
</dbReference>
<dbReference type="InterPro" id="IPR006594">
    <property type="entry name" value="LisH"/>
</dbReference>
<dbReference type="InterPro" id="IPR033270">
    <property type="entry name" value="VPRBP/DCAF1"/>
</dbReference>
<dbReference type="InterPro" id="IPR015943">
    <property type="entry name" value="WD40/YVTN_repeat-like_dom_sf"/>
</dbReference>
<dbReference type="InterPro" id="IPR036322">
    <property type="entry name" value="WD40_repeat_dom_sf"/>
</dbReference>
<dbReference type="PANTHER" id="PTHR13129:SF4">
    <property type="entry name" value="DDB1- AND CUL4-ASSOCIATED FACTOR 1"/>
    <property type="match status" value="1"/>
</dbReference>
<dbReference type="PANTHER" id="PTHR13129">
    <property type="entry name" value="VPRBP PROTEIN-RELATED"/>
    <property type="match status" value="1"/>
</dbReference>
<dbReference type="SMART" id="SM00667">
    <property type="entry name" value="LisH"/>
    <property type="match status" value="1"/>
</dbReference>
<dbReference type="SUPFAM" id="SSF48371">
    <property type="entry name" value="ARM repeat"/>
    <property type="match status" value="1"/>
</dbReference>
<dbReference type="SUPFAM" id="SSF50978">
    <property type="entry name" value="WD40 repeat-like"/>
    <property type="match status" value="1"/>
</dbReference>
<dbReference type="PROSITE" id="PS50896">
    <property type="entry name" value="LISH"/>
    <property type="match status" value="1"/>
</dbReference>
<sequence>MTTVVVHVDSKAELTTLLEQWEKDHGSGQDMVPILTRMSELIEKETEEYRKGDPDPFDDRHPGRADPECMLGHLLRILFKNDDFMNALVNAYVMTSREPPLNTAACRLLLDIMPGLETAVVFQEKEGIVENLFKWAREADQPLRTYSTGLLGGAMENQDIAANYRDENSQLVAIVLRRLRELQLQEVALRQDSKRPSPRKLSSEPLLPLDEEAVDMDYGDMAVDVVDGEQESSRDMEISFRLDSSHKTSSRVNSATKPEEGGLKKNKSAKHGDRENFRKAKQKLGFSSSDPDRVFVELSNSSWSEMSPWVIGTNYTLYPMTPAIEQRLILQYLTPLGEYQELLPIFMQLGSRELMMFYIDLKQTNDVLLTFEALKHLASLLLHNKFATEFVAHGGVQKLLEIPRPSMAATGVSMCLYYLSYNQDAMERVCMHPHNVLSDVVNYTLWLMECSHASGCCHATMFFSICFSFRAVLELFDRYDGLRRLVNLISTLEILNLEDQGALLSDDEIFASRQTGKHTCMALRKYFEAHLAIKLEQVKQSLQRTEGGILVHPQPPYKACSYTHEQIVEMMEFLIEYGPAQLYWEPAEVFLKLSCVQLLLQLISIACNWKTYYARNDTVRFALDVLAILTVVPKIQLQLAESVDVLDEAGSAVSTVGISIILGVAEGEFFIHDAEIQKSALQIIINCVCGPDNRISSIGKFISGTPRRKLSQTPKSSEHTLAKMWNVVQSNNGIKVLLSLLSIKMPITDADQIRALACKALVGLSRSSTVRQIISKLPLFSSCQIQQLMKEPVLQDKRSDHVKFCKYAAELIERVSGKPLLIGTDVSLARLQKADVVAQSRISFPEKELLLLIRNHLISKGLGETATVLTREADLPMTAASHSSAFTPVTAAASPVSLPRTPRIANGIASRLGSHATVGASAPSAPPAHPPPRPPQGSLPLPGPSYAGNSPLIGRISFIRERPSPCNGRKIRVLRQKSDHGAYSQSPAIKKQLDRHLPSPPTLDSIITEYLREQHARCKNPVATCPPFSLFTPHQCPEPKQRRQAPINFTSRLNRRASFPKYGGVDGGCFDRHLIFSRFRPISVFREANEDESGFTCCAFSARERFLMLGTCTGQLKLYNVFSGQEEASYNCHNSAITHLEPSRDGSLLLTSATWSQPLSALWGMKSVFDMKHSFTEDHYVEFSKHSQDRVIGTKGDIAHIYDIQTGNKLLTLFNPDLANNYKRNCATFNPTDDLVLNDGVLWDVRSAQAIHKFDKFNMNISGVFHPNGLEVIINTEIWDLRTFHLLHTVPALDQCRVVFNHTGTVMYGAMLQADDEDDLLEERMKSPFGSSFRTFNATDYKPIATIDVKRNIFDLCTDTKDCYLAVIENQGSMDALNMDTVCRLYEVGRQRLAEDEDEEEDQEEEEQEEEDDDEDDDDTDDLDELDTDQLLEAELEEDDNNENAGEDGDNDFSPSDEELANLLEEGEEGEDEDSDADEEVELILGDTDSSDNSDLEDDIILSLNE</sequence>
<organism>
    <name type="scientific">Mus musculus</name>
    <name type="common">Mouse</name>
    <dbReference type="NCBI Taxonomy" id="10090"/>
    <lineage>
        <taxon>Eukaryota</taxon>
        <taxon>Metazoa</taxon>
        <taxon>Chordata</taxon>
        <taxon>Craniata</taxon>
        <taxon>Vertebrata</taxon>
        <taxon>Euteleostomi</taxon>
        <taxon>Mammalia</taxon>
        <taxon>Eutheria</taxon>
        <taxon>Euarchontoglires</taxon>
        <taxon>Glires</taxon>
        <taxon>Rodentia</taxon>
        <taxon>Myomorpha</taxon>
        <taxon>Muroidea</taxon>
        <taxon>Muridae</taxon>
        <taxon>Murinae</taxon>
        <taxon>Mus</taxon>
        <taxon>Mus</taxon>
    </lineage>
</organism>